<name>LEP_BUCBP</name>
<gene>
    <name type="primary">lepB</name>
    <name type="ordered locus">bbp_240</name>
</gene>
<reference key="1">
    <citation type="journal article" date="2003" name="Proc. Natl. Acad. Sci. U.S.A.">
        <title>Reductive genome evolution in Buchnera aphidicola.</title>
        <authorList>
            <person name="van Ham R.C.H.J."/>
            <person name="Kamerbeek J."/>
            <person name="Palacios C."/>
            <person name="Rausell C."/>
            <person name="Abascal F."/>
            <person name="Bastolla U."/>
            <person name="Fernandez J.M."/>
            <person name="Jimenez L."/>
            <person name="Postigo M."/>
            <person name="Silva F.J."/>
            <person name="Tamames J."/>
            <person name="Viguera E."/>
            <person name="Latorre A."/>
            <person name="Valencia A."/>
            <person name="Moran F."/>
            <person name="Moya A."/>
        </authorList>
    </citation>
    <scope>NUCLEOTIDE SEQUENCE [LARGE SCALE GENOMIC DNA]</scope>
    <source>
        <strain>Bp</strain>
    </source>
</reference>
<feature type="chain" id="PRO_0000109505" description="Signal peptidase I">
    <location>
        <begin position="1"/>
        <end position="310"/>
    </location>
</feature>
<feature type="transmembrane region" description="Helical" evidence="2">
    <location>
        <begin position="5"/>
        <end position="25"/>
    </location>
</feature>
<feature type="topological domain" description="Cytoplasmic" evidence="2">
    <location>
        <begin position="26"/>
        <end position="57"/>
    </location>
</feature>
<feature type="transmembrane region" description="Helical" evidence="2">
    <location>
        <begin position="58"/>
        <end position="78"/>
    </location>
</feature>
<feature type="topological domain" description="Extracellular" evidence="2">
    <location>
        <begin position="79"/>
        <end position="310"/>
    </location>
</feature>
<feature type="active site" evidence="1">
    <location>
        <position position="82"/>
    </location>
</feature>
<feature type="active site" evidence="1">
    <location>
        <position position="137"/>
    </location>
</feature>
<organism>
    <name type="scientific">Buchnera aphidicola subsp. Baizongia pistaciae (strain Bp)</name>
    <dbReference type="NCBI Taxonomy" id="224915"/>
    <lineage>
        <taxon>Bacteria</taxon>
        <taxon>Pseudomonadati</taxon>
        <taxon>Pseudomonadota</taxon>
        <taxon>Gammaproteobacteria</taxon>
        <taxon>Enterobacterales</taxon>
        <taxon>Erwiniaceae</taxon>
        <taxon>Buchnera</taxon>
    </lineage>
</organism>
<sequence length="310" mass="36313">MSNYLSSFLLASSLITGTLWIINKILSHNLLDSKIPFNIKKSKIYYKSKQVVQTFASFFPILIIVFIIRTFICEPFQIPSESMMPTLLPGDFILVKKFSYGIKNPFSNNVIVFINTPKRGDIVVFKHPNNNAINYVKRIVGLPGDKINYNILTKRLTITPNNINEQHTKNISINYKYIKPNDFTKHFKLNNIILNNVHSLESSNNNLLQLEMYQEKIEKIAYNIFFKKKLIDQKDLYFKQFSQKQGTWIVPKHKYFVLGDNRDNSLDSRYWGFVPEKNLIGKVVFIWMHLIKKEGQWPTGIQFDRIGNIY</sequence>
<accession>Q89AM6</accession>
<dbReference type="EC" id="3.4.21.89"/>
<dbReference type="EMBL" id="AE016826">
    <property type="protein sequence ID" value="AAO26967.1"/>
    <property type="molecule type" value="Genomic_DNA"/>
</dbReference>
<dbReference type="RefSeq" id="WP_011091368.1">
    <property type="nucleotide sequence ID" value="NC_004545.1"/>
</dbReference>
<dbReference type="SMR" id="Q89AM6"/>
<dbReference type="STRING" id="224915.bbp_240"/>
<dbReference type="MEROPS" id="S26.001"/>
<dbReference type="KEGG" id="bab:bbp_240"/>
<dbReference type="eggNOG" id="COG0681">
    <property type="taxonomic scope" value="Bacteria"/>
</dbReference>
<dbReference type="HOGENOM" id="CLU_028723_1_1_6"/>
<dbReference type="OrthoDB" id="9815782at2"/>
<dbReference type="Proteomes" id="UP000000601">
    <property type="component" value="Chromosome"/>
</dbReference>
<dbReference type="GO" id="GO:0005886">
    <property type="term" value="C:plasma membrane"/>
    <property type="evidence" value="ECO:0007669"/>
    <property type="project" value="UniProtKB-SubCell"/>
</dbReference>
<dbReference type="GO" id="GO:0004252">
    <property type="term" value="F:serine-type endopeptidase activity"/>
    <property type="evidence" value="ECO:0007669"/>
    <property type="project" value="UniProtKB-EC"/>
</dbReference>
<dbReference type="GO" id="GO:0006465">
    <property type="term" value="P:signal peptide processing"/>
    <property type="evidence" value="ECO:0007669"/>
    <property type="project" value="InterPro"/>
</dbReference>
<dbReference type="CDD" id="cd06530">
    <property type="entry name" value="S26_SPase_I"/>
    <property type="match status" value="1"/>
</dbReference>
<dbReference type="Gene3D" id="2.170.230.10">
    <property type="match status" value="1"/>
</dbReference>
<dbReference type="Gene3D" id="2.10.109.10">
    <property type="entry name" value="Umud Fragment, subunit A"/>
    <property type="match status" value="1"/>
</dbReference>
<dbReference type="InterPro" id="IPR036286">
    <property type="entry name" value="LexA/Signal_pep-like_sf"/>
</dbReference>
<dbReference type="InterPro" id="IPR000223">
    <property type="entry name" value="Pept_S26A_signal_pept_1"/>
</dbReference>
<dbReference type="InterPro" id="IPR019758">
    <property type="entry name" value="Pept_S26A_signal_pept_1_CS"/>
</dbReference>
<dbReference type="InterPro" id="IPR019757">
    <property type="entry name" value="Pept_S26A_signal_pept_1_Lys-AS"/>
</dbReference>
<dbReference type="InterPro" id="IPR019756">
    <property type="entry name" value="Pept_S26A_signal_pept_1_Ser-AS"/>
</dbReference>
<dbReference type="InterPro" id="IPR019533">
    <property type="entry name" value="Peptidase_S26"/>
</dbReference>
<dbReference type="InterPro" id="IPR019766">
    <property type="entry name" value="Sign_pep_all-beta_subdom"/>
</dbReference>
<dbReference type="NCBIfam" id="NF008114">
    <property type="entry name" value="PRK10861.1"/>
    <property type="match status" value="1"/>
</dbReference>
<dbReference type="NCBIfam" id="TIGR02227">
    <property type="entry name" value="sigpep_I_bact"/>
    <property type="match status" value="1"/>
</dbReference>
<dbReference type="PANTHER" id="PTHR43390:SF1">
    <property type="entry name" value="CHLOROPLAST PROCESSING PEPTIDASE"/>
    <property type="match status" value="1"/>
</dbReference>
<dbReference type="PANTHER" id="PTHR43390">
    <property type="entry name" value="SIGNAL PEPTIDASE I"/>
    <property type="match status" value="1"/>
</dbReference>
<dbReference type="Pfam" id="PF10502">
    <property type="entry name" value="Peptidase_S26"/>
    <property type="match status" value="1"/>
</dbReference>
<dbReference type="PRINTS" id="PR00727">
    <property type="entry name" value="LEADERPTASE"/>
</dbReference>
<dbReference type="SUPFAM" id="SSF51306">
    <property type="entry name" value="LexA/Signal peptidase"/>
    <property type="match status" value="1"/>
</dbReference>
<dbReference type="PROSITE" id="PS00501">
    <property type="entry name" value="SPASE_I_1"/>
    <property type="match status" value="1"/>
</dbReference>
<dbReference type="PROSITE" id="PS00760">
    <property type="entry name" value="SPASE_I_2"/>
    <property type="match status" value="1"/>
</dbReference>
<dbReference type="PROSITE" id="PS00761">
    <property type="entry name" value="SPASE_I_3"/>
    <property type="match status" value="1"/>
</dbReference>
<evidence type="ECO:0000250" key="1"/>
<evidence type="ECO:0000255" key="2"/>
<evidence type="ECO:0000305" key="3"/>
<protein>
    <recommendedName>
        <fullName>Signal peptidase I</fullName>
        <shortName>SPase I</shortName>
        <ecNumber>3.4.21.89</ecNumber>
    </recommendedName>
    <alternativeName>
        <fullName>Leader peptidase I</fullName>
    </alternativeName>
</protein>
<comment type="catalytic activity">
    <reaction>
        <text>Cleavage of hydrophobic, N-terminal signal or leader sequences from secreted and periplasmic proteins.</text>
        <dbReference type="EC" id="3.4.21.89"/>
    </reaction>
</comment>
<comment type="subcellular location">
    <subcellularLocation>
        <location evidence="1">Cell membrane</location>
        <topology evidence="1">Multi-pass membrane protein</topology>
    </subcellularLocation>
</comment>
<comment type="similarity">
    <text evidence="3">Belongs to the peptidase S26 family.</text>
</comment>
<proteinExistence type="inferred from homology"/>
<keyword id="KW-1003">Cell membrane</keyword>
<keyword id="KW-0378">Hydrolase</keyword>
<keyword id="KW-0472">Membrane</keyword>
<keyword id="KW-0645">Protease</keyword>
<keyword id="KW-1185">Reference proteome</keyword>
<keyword id="KW-0812">Transmembrane</keyword>
<keyword id="KW-1133">Transmembrane helix</keyword>